<dbReference type="EMBL" id="DQ291132">
    <property type="protein sequence ID" value="ABB81977.1"/>
    <property type="molecule type" value="Genomic_DNA"/>
</dbReference>
<dbReference type="EMBL" id="DQ291132">
    <property type="protein sequence ID" value="ABB82014.1"/>
    <property type="molecule type" value="Genomic_DNA"/>
</dbReference>
<dbReference type="RefSeq" id="YP_635853.1">
    <property type="nucleotide sequence ID" value="NC_008099.1"/>
</dbReference>
<dbReference type="RefSeq" id="YP_635909.1">
    <property type="nucleotide sequence ID" value="NC_008099.1"/>
</dbReference>
<dbReference type="SMR" id="Q20ET6"/>
<dbReference type="GeneID" id="4100073"/>
<dbReference type="GeneID" id="4100117"/>
<dbReference type="GO" id="GO:0009535">
    <property type="term" value="C:chloroplast thylakoid membrane"/>
    <property type="evidence" value="ECO:0007669"/>
    <property type="project" value="UniProtKB-SubCell"/>
</dbReference>
<dbReference type="GO" id="GO:0005739">
    <property type="term" value="C:mitochondrion"/>
    <property type="evidence" value="ECO:0007669"/>
    <property type="project" value="GOC"/>
</dbReference>
<dbReference type="GO" id="GO:0045158">
    <property type="term" value="F:electron transporter, transferring electrons within cytochrome b6/f complex of photosystem II activity"/>
    <property type="evidence" value="ECO:0007669"/>
    <property type="project" value="UniProtKB-UniRule"/>
</dbReference>
<dbReference type="GO" id="GO:0045156">
    <property type="term" value="F:electron transporter, transferring electrons within the cyclic electron transport pathway of photosynthesis activity"/>
    <property type="evidence" value="ECO:0007669"/>
    <property type="project" value="InterPro"/>
</dbReference>
<dbReference type="GO" id="GO:0008121">
    <property type="term" value="F:ubiquinol-cytochrome-c reductase activity"/>
    <property type="evidence" value="ECO:0007669"/>
    <property type="project" value="TreeGrafter"/>
</dbReference>
<dbReference type="GO" id="GO:0006122">
    <property type="term" value="P:mitochondrial electron transport, ubiquinol to cytochrome c"/>
    <property type="evidence" value="ECO:0007669"/>
    <property type="project" value="TreeGrafter"/>
</dbReference>
<dbReference type="GO" id="GO:0009767">
    <property type="term" value="P:photosynthetic electron transport chain"/>
    <property type="evidence" value="ECO:0007669"/>
    <property type="project" value="InterPro"/>
</dbReference>
<dbReference type="CDD" id="cd00290">
    <property type="entry name" value="cytochrome_b_C"/>
    <property type="match status" value="1"/>
</dbReference>
<dbReference type="FunFam" id="1.10.287.980:FF:000001">
    <property type="entry name" value="Cytochrome b6-f complex subunit 4"/>
    <property type="match status" value="1"/>
</dbReference>
<dbReference type="FunFam" id="1.20.5.510:FF:000002">
    <property type="entry name" value="Cytochrome b6-f complex subunit 4"/>
    <property type="match status" value="1"/>
</dbReference>
<dbReference type="Gene3D" id="1.10.287.980">
    <property type="entry name" value="plastocyanin oxidoreductase"/>
    <property type="match status" value="1"/>
</dbReference>
<dbReference type="Gene3D" id="1.20.5.510">
    <property type="entry name" value="Single helix bin"/>
    <property type="match status" value="1"/>
</dbReference>
<dbReference type="HAMAP" id="MF_01344">
    <property type="entry name" value="Cytb6_f_subIV"/>
    <property type="match status" value="1"/>
</dbReference>
<dbReference type="InterPro" id="IPR005798">
    <property type="entry name" value="Cyt_b/b6_C"/>
</dbReference>
<dbReference type="InterPro" id="IPR036150">
    <property type="entry name" value="Cyt_b/b6_C_sf"/>
</dbReference>
<dbReference type="InterPro" id="IPR005870">
    <property type="entry name" value="Cyt_b6/f_cplx_suIV"/>
</dbReference>
<dbReference type="InterPro" id="IPR048260">
    <property type="entry name" value="Cytochrome_b_C_euk/bac"/>
</dbReference>
<dbReference type="NCBIfam" id="TIGR01156">
    <property type="entry name" value="cytb6_f_IV"/>
    <property type="match status" value="1"/>
</dbReference>
<dbReference type="PANTHER" id="PTHR19271">
    <property type="entry name" value="CYTOCHROME B"/>
    <property type="match status" value="1"/>
</dbReference>
<dbReference type="PANTHER" id="PTHR19271:SF41">
    <property type="entry name" value="CYTOCHROME B_B6 C-TERMINAL REGION PROFILE DOMAIN-CONTAINING PROTEIN"/>
    <property type="match status" value="1"/>
</dbReference>
<dbReference type="Pfam" id="PF00032">
    <property type="entry name" value="Cytochrom_B_C"/>
    <property type="match status" value="1"/>
</dbReference>
<dbReference type="PIRSF" id="PIRSF000033">
    <property type="entry name" value="B6f_17K"/>
    <property type="match status" value="1"/>
</dbReference>
<dbReference type="SUPFAM" id="SSF81648">
    <property type="entry name" value="a domain/subunit of cytochrome bc1 complex (Ubiquinol-cytochrome c reductase)"/>
    <property type="match status" value="1"/>
</dbReference>
<dbReference type="PROSITE" id="PS51003">
    <property type="entry name" value="CYTB_CTER"/>
    <property type="match status" value="1"/>
</dbReference>
<sequence>MAVTKKPDLSDPVLRAKLAKGMGHNYYGEPAWPNDLLYMFPVVILGTFALSISLAVLAPAAMGEPANPFATPLEILPEWYFYPVFQILRVVPNKLLGVLCMAAVPVGLITVPFIESINKFQNPFRRPIASTLFLFGTATAVWLGIGAALPIDISLTLGLF</sequence>
<gene>
    <name evidence="2" type="primary">petD</name>
</gene>
<geneLocation type="chloroplast"/>
<accession>Q20ET6</accession>
<evidence type="ECO:0000250" key="1"/>
<evidence type="ECO:0000255" key="2">
    <source>
        <dbReference type="HAMAP-Rule" id="MF_01344"/>
    </source>
</evidence>
<comment type="function">
    <text evidence="2">Component of the cytochrome b6-f complex, which mediates electron transfer between photosystem II (PSII) and photosystem I (PSI), cyclic electron flow around PSI, and state transitions.</text>
</comment>
<comment type="subunit">
    <text evidence="1">The 4 large subunits of the cytochrome b6-f complex are cytochrome b6, subunit IV (17 kDa polypeptide, petD), cytochrome f and the Rieske protein, while the 4 small subunits are petG, petL, petM and petN. The complex functions as a dimer (By similarity).</text>
</comment>
<comment type="subcellular location">
    <subcellularLocation>
        <location evidence="2">Plastid</location>
        <location evidence="2">Chloroplast thylakoid membrane</location>
        <topology evidence="2">Multi-pass membrane protein</topology>
    </subcellularLocation>
</comment>
<comment type="similarity">
    <text evidence="2">Belongs to the cytochrome b family. PetD subfamily.</text>
</comment>
<keyword id="KW-0150">Chloroplast</keyword>
<keyword id="KW-0249">Electron transport</keyword>
<keyword id="KW-0472">Membrane</keyword>
<keyword id="KW-0602">Photosynthesis</keyword>
<keyword id="KW-0934">Plastid</keyword>
<keyword id="KW-0793">Thylakoid</keyword>
<keyword id="KW-0812">Transmembrane</keyword>
<keyword id="KW-1133">Transmembrane helix</keyword>
<keyword id="KW-0813">Transport</keyword>
<organism>
    <name type="scientific">Oltmannsiellopsis viridis</name>
    <name type="common">Marine flagellate</name>
    <name type="synonym">Oltmannsiella viridis</name>
    <dbReference type="NCBI Taxonomy" id="51324"/>
    <lineage>
        <taxon>Eukaryota</taxon>
        <taxon>Viridiplantae</taxon>
        <taxon>Chlorophyta</taxon>
        <taxon>Ulvophyceae</taxon>
        <taxon>Oltmannsiellopsidales</taxon>
        <taxon>Oltmannsiellopsidaceae</taxon>
        <taxon>Oltmannsiellopsis</taxon>
    </lineage>
</organism>
<proteinExistence type="inferred from homology"/>
<reference key="1">
    <citation type="journal article" date="2006" name="BMC Biol.">
        <title>The complete chloroplast DNA sequence of the green alga Oltmannsiellopsis viridis reveals a distinctive quadripartite architecture in the chloroplast genome of early diverging ulvophytes.</title>
        <authorList>
            <person name="Pombert J.-F."/>
            <person name="Lemieux C."/>
            <person name="Turmel M."/>
        </authorList>
    </citation>
    <scope>NUCLEOTIDE SEQUENCE [LARGE SCALE GENOMIC DNA]</scope>
</reference>
<feature type="chain" id="PRO_0000255568" description="Cytochrome b6-f complex subunit 4">
    <location>
        <begin position="1"/>
        <end position="160"/>
    </location>
</feature>
<feature type="transmembrane region" description="Helical" evidence="2">
    <location>
        <begin position="36"/>
        <end position="56"/>
    </location>
</feature>
<feature type="transmembrane region" description="Helical" evidence="2">
    <location>
        <begin position="95"/>
        <end position="115"/>
    </location>
</feature>
<feature type="transmembrane region" description="Helical" evidence="2">
    <location>
        <begin position="131"/>
        <end position="151"/>
    </location>
</feature>
<protein>
    <recommendedName>
        <fullName evidence="2">Cytochrome b6-f complex subunit 4</fullName>
    </recommendedName>
    <alternativeName>
        <fullName evidence="2">17 kDa polypeptide</fullName>
    </alternativeName>
</protein>
<name>PETD_OLTVI</name>